<feature type="chain" id="PRO_0000065106" description="GILT-like protein C02D5.2">
    <location>
        <begin position="1"/>
        <end position="323"/>
    </location>
</feature>
<feature type="transmembrane region" description="Helical" evidence="1">
    <location>
        <begin position="13"/>
        <end position="32"/>
    </location>
</feature>
<feature type="transmembrane region" description="Helical" evidence="1">
    <location>
        <begin position="37"/>
        <end position="59"/>
    </location>
</feature>
<feature type="transmembrane region" description="Helical" evidence="1">
    <location>
        <begin position="87"/>
        <end position="104"/>
    </location>
</feature>
<feature type="glycosylation site" description="N-linked (GlcNAc...) asparagine" evidence="1">
    <location>
        <position position="35"/>
    </location>
</feature>
<feature type="glycosylation site" description="N-linked (GlcNAc...) asparagine" evidence="1">
    <location>
        <position position="289"/>
    </location>
</feature>
<feature type="splice variant" id="VSP_020781" description="In isoform b." evidence="2">
    <location>
        <begin position="1"/>
        <end position="60"/>
    </location>
</feature>
<reference key="1">
    <citation type="journal article" date="1994" name="Nature">
        <title>2.2 Mb of contiguous nucleotide sequence from chromosome III of C. elegans.</title>
        <authorList>
            <person name="Wilson R."/>
            <person name="Ainscough R."/>
            <person name="Anderson K."/>
            <person name="Baynes C."/>
            <person name="Berks M."/>
            <person name="Bonfield J."/>
            <person name="Burton J."/>
            <person name="Connell M."/>
            <person name="Copsey T."/>
            <person name="Cooper J."/>
            <person name="Coulson A."/>
            <person name="Craxton M."/>
            <person name="Dear S."/>
            <person name="Du Z."/>
            <person name="Durbin R."/>
            <person name="Favello A."/>
            <person name="Fraser A."/>
            <person name="Fulton L."/>
            <person name="Gardner A."/>
            <person name="Green P."/>
            <person name="Hawkins T."/>
            <person name="Hillier L."/>
            <person name="Jier M."/>
            <person name="Johnston L."/>
            <person name="Jones M."/>
            <person name="Kershaw J."/>
            <person name="Kirsten J."/>
            <person name="Laisster N."/>
            <person name="Latreille P."/>
            <person name="Lightning J."/>
            <person name="Lloyd C."/>
            <person name="Mortimore B."/>
            <person name="O'Callaghan M."/>
            <person name="Parsons J."/>
            <person name="Percy C."/>
            <person name="Rifken L."/>
            <person name="Roopra A."/>
            <person name="Saunders D."/>
            <person name="Shownkeen R."/>
            <person name="Sims M."/>
            <person name="Smaldon N."/>
            <person name="Smith A."/>
            <person name="Smith M."/>
            <person name="Sonnhammer E."/>
            <person name="Staden R."/>
            <person name="Sulston J."/>
            <person name="Thierry-Mieg J."/>
            <person name="Thomas K."/>
            <person name="Vaudin M."/>
            <person name="Vaughan K."/>
            <person name="Waterston R."/>
            <person name="Watson A."/>
            <person name="Weinstock L."/>
            <person name="Wilkinson-Sproat J."/>
            <person name="Wohldman P."/>
        </authorList>
    </citation>
    <scope>NUCLEOTIDE SEQUENCE [LARGE SCALE GENOMIC DNA]</scope>
    <source>
        <strain>Bristol N2</strain>
    </source>
</reference>
<reference key="2">
    <citation type="journal article" date="1998" name="Science">
        <title>Genome sequence of the nematode C. elegans: a platform for investigating biology.</title>
        <authorList>
            <consortium name="The C. elegans sequencing consortium"/>
        </authorList>
    </citation>
    <scope>NUCLEOTIDE SEQUENCE [LARGE SCALE GENOMIC DNA]</scope>
    <scope>ALTERNATIVE SPLICING</scope>
    <source>
        <strain>Bristol N2</strain>
    </source>
</reference>
<comment type="subcellular location">
    <subcellularLocation>
        <location evidence="2">Membrane</location>
        <topology evidence="2">Multi-pass membrane protein</topology>
    </subcellularLocation>
</comment>
<comment type="alternative products">
    <event type="alternative splicing"/>
    <isoform>
        <id>P34276-1</id>
        <name>a</name>
        <sequence type="displayed"/>
    </isoform>
    <isoform>
        <id>P34276-2</id>
        <name>b</name>
        <sequence type="described" ref="VSP_020781"/>
    </isoform>
</comment>
<comment type="similarity">
    <text evidence="2">Belongs to the GILT family.</text>
</comment>
<gene>
    <name type="ORF">C02D5.2</name>
</gene>
<protein>
    <recommendedName>
        <fullName>GILT-like protein C02D5.2</fullName>
    </recommendedName>
</protein>
<dbReference type="EMBL" id="FO080279">
    <property type="protein sequence ID" value="CCD62558.1"/>
    <property type="molecule type" value="Genomic_DNA"/>
</dbReference>
<dbReference type="EMBL" id="FO080279">
    <property type="protein sequence ID" value="CCD62559.1"/>
    <property type="molecule type" value="Genomic_DNA"/>
</dbReference>
<dbReference type="PIR" id="S44744">
    <property type="entry name" value="S44744"/>
</dbReference>
<dbReference type="RefSeq" id="NP_001040839.1">
    <molecule id="P34276-1"/>
    <property type="nucleotide sequence ID" value="NM_001047374.4"/>
</dbReference>
<dbReference type="RefSeq" id="NP_001040840.1">
    <molecule id="P34276-2"/>
    <property type="nucleotide sequence ID" value="NM_001047375.3"/>
</dbReference>
<dbReference type="SMR" id="P34276"/>
<dbReference type="FunCoup" id="P34276">
    <property type="interactions" value="126"/>
</dbReference>
<dbReference type="PaxDb" id="6239-C02D5.2a"/>
<dbReference type="PeptideAtlas" id="P34276"/>
<dbReference type="EnsemblMetazoa" id="C02D5.2a.1">
    <molecule id="P34276-1"/>
    <property type="protein sequence ID" value="C02D5.2a.1"/>
    <property type="gene ID" value="WBGene00015336"/>
</dbReference>
<dbReference type="EnsemblMetazoa" id="C02D5.2b.1">
    <molecule id="P34276-2"/>
    <property type="protein sequence ID" value="C02D5.2b.1"/>
    <property type="gene ID" value="WBGene00015336"/>
</dbReference>
<dbReference type="GeneID" id="176203"/>
<dbReference type="KEGG" id="cel:CELE_C02D5.2"/>
<dbReference type="UCSC" id="C02D5.2a">
    <molecule id="P34276-1"/>
    <property type="organism name" value="c. elegans"/>
</dbReference>
<dbReference type="AGR" id="WB:WBGene00015336"/>
<dbReference type="CTD" id="176203"/>
<dbReference type="WormBase" id="C02D5.2a">
    <molecule id="P34276-1"/>
    <property type="protein sequence ID" value="CE00034"/>
    <property type="gene ID" value="WBGene00015336"/>
</dbReference>
<dbReference type="WormBase" id="C02D5.2b">
    <molecule id="P34276-2"/>
    <property type="protein sequence ID" value="CE39554"/>
    <property type="gene ID" value="WBGene00015336"/>
</dbReference>
<dbReference type="eggNOG" id="KOG3160">
    <property type="taxonomic scope" value="Eukaryota"/>
</dbReference>
<dbReference type="GeneTree" id="ENSGT00390000010450"/>
<dbReference type="HOGENOM" id="CLU_066886_2_0_1"/>
<dbReference type="InParanoid" id="P34276"/>
<dbReference type="OrthoDB" id="958254at2759"/>
<dbReference type="PhylomeDB" id="P34276"/>
<dbReference type="PRO" id="PR:P34276"/>
<dbReference type="Proteomes" id="UP000001940">
    <property type="component" value="Chromosome III"/>
</dbReference>
<dbReference type="Bgee" id="WBGene00015336">
    <property type="expression patterns" value="Expressed in pharyngeal muscle cell (C elegans) and 3 other cell types or tissues"/>
</dbReference>
<dbReference type="GO" id="GO:0016020">
    <property type="term" value="C:membrane"/>
    <property type="evidence" value="ECO:0007669"/>
    <property type="project" value="UniProtKB-SubCell"/>
</dbReference>
<dbReference type="GO" id="GO:0016491">
    <property type="term" value="F:oxidoreductase activity"/>
    <property type="evidence" value="ECO:0000318"/>
    <property type="project" value="GO_Central"/>
</dbReference>
<dbReference type="GO" id="GO:0016671">
    <property type="term" value="F:oxidoreductase activity, acting on a sulfur group of donors, disulfide as acceptor"/>
    <property type="evidence" value="ECO:0007669"/>
    <property type="project" value="InterPro"/>
</dbReference>
<dbReference type="InterPro" id="IPR004911">
    <property type="entry name" value="Interferon-induced_GILT"/>
</dbReference>
<dbReference type="PANTHER" id="PTHR13234">
    <property type="entry name" value="GAMMA-INTERFERON INDUCIBLE LYSOSOMAL THIOL REDUCTASE GILT"/>
    <property type="match status" value="1"/>
</dbReference>
<dbReference type="PANTHER" id="PTHR13234:SF70">
    <property type="entry name" value="GILT-LIKE PROTEIN C02D5.2"/>
    <property type="match status" value="1"/>
</dbReference>
<dbReference type="Pfam" id="PF03227">
    <property type="entry name" value="GILT"/>
    <property type="match status" value="1"/>
</dbReference>
<accession>P34276</accession>
<accession>Q2L6Y8</accession>
<keyword id="KW-0025">Alternative splicing</keyword>
<keyword id="KW-0325">Glycoprotein</keyword>
<keyword id="KW-0472">Membrane</keyword>
<keyword id="KW-1185">Reference proteome</keyword>
<keyword id="KW-0812">Transmembrane</keyword>
<keyword id="KW-1133">Transmembrane helix</keyword>
<evidence type="ECO:0000255" key="1"/>
<evidence type="ECO:0000305" key="2"/>
<proteinExistence type="inferred from homology"/>
<sequence length="323" mass="36932">MSKYLRTSHPSPLICRPILTFSSLHILTAFLISGNSSYINWSVTIILLILGLYACHRFLNMKKLTRDAQEPLLPHIRPSTRNKIRKYIYGTIFILSIFLLYRSLNSPDTSKHGIGRNGDFIEYEPKAGPTIKEPVENIVKLDVYMEAQCPDTSRFFRQQLKKAWDILGRLNRIELNVIPFGKARCTEKGNDFECQCQHGPTECQINQLMNCVIDRFGFPHRYLPGVLCMQGKYSLDEAMKCVTENYPSEYERMRECASGTRGRRLLALSGQKTASLTPAIDFIPWIVINGSRNSDALYDLTQNVCEAMQPMPSACKDYLRSLQ</sequence>
<organism>
    <name type="scientific">Caenorhabditis elegans</name>
    <dbReference type="NCBI Taxonomy" id="6239"/>
    <lineage>
        <taxon>Eukaryota</taxon>
        <taxon>Metazoa</taxon>
        <taxon>Ecdysozoa</taxon>
        <taxon>Nematoda</taxon>
        <taxon>Chromadorea</taxon>
        <taxon>Rhabditida</taxon>
        <taxon>Rhabditina</taxon>
        <taxon>Rhabditomorpha</taxon>
        <taxon>Rhabditoidea</taxon>
        <taxon>Rhabditidae</taxon>
        <taxon>Peloderinae</taxon>
        <taxon>Caenorhabditis</taxon>
    </lineage>
</organism>
<name>YKJ2_CAEEL</name>